<evidence type="ECO:0000255" key="1">
    <source>
        <dbReference type="HAMAP-Rule" id="MF_00409"/>
    </source>
</evidence>
<feature type="chain" id="PRO_0000291215" description="Tetraacyldisaccharide 4'-kinase">
    <location>
        <begin position="1"/>
        <end position="335"/>
    </location>
</feature>
<feature type="binding site" evidence="1">
    <location>
        <begin position="62"/>
        <end position="69"/>
    </location>
    <ligand>
        <name>ATP</name>
        <dbReference type="ChEBI" id="CHEBI:30616"/>
    </ligand>
</feature>
<keyword id="KW-0067">ATP-binding</keyword>
<keyword id="KW-0418">Kinase</keyword>
<keyword id="KW-0441">Lipid A biosynthesis</keyword>
<keyword id="KW-0444">Lipid biosynthesis</keyword>
<keyword id="KW-0443">Lipid metabolism</keyword>
<keyword id="KW-0547">Nucleotide-binding</keyword>
<keyword id="KW-1185">Reference proteome</keyword>
<keyword id="KW-0808">Transferase</keyword>
<proteinExistence type="inferred from homology"/>
<comment type="function">
    <text evidence="1">Transfers the gamma-phosphate of ATP to the 4'-position of a tetraacyldisaccharide 1-phosphate intermediate (termed DS-1-P) to form tetraacyldisaccharide 1,4'-bis-phosphate (lipid IVA).</text>
</comment>
<comment type="catalytic activity">
    <reaction evidence="1">
        <text>a lipid A disaccharide + ATP = a lipid IVA + ADP + H(+)</text>
        <dbReference type="Rhea" id="RHEA:67840"/>
        <dbReference type="ChEBI" id="CHEBI:15378"/>
        <dbReference type="ChEBI" id="CHEBI:30616"/>
        <dbReference type="ChEBI" id="CHEBI:176343"/>
        <dbReference type="ChEBI" id="CHEBI:176425"/>
        <dbReference type="ChEBI" id="CHEBI:456216"/>
        <dbReference type="EC" id="2.7.1.130"/>
    </reaction>
</comment>
<comment type="pathway">
    <text evidence="1">Glycolipid biosynthesis; lipid IV(A) biosynthesis; lipid IV(A) from (3R)-3-hydroxytetradecanoyl-[acyl-carrier-protein] and UDP-N-acetyl-alpha-D-glucosamine: step 6/6.</text>
</comment>
<comment type="similarity">
    <text evidence="1">Belongs to the LpxK family.</text>
</comment>
<organism>
    <name type="scientific">Methylobacillus flagellatus (strain ATCC 51484 / DSM 6875 / VKM B-1610 / KT)</name>
    <dbReference type="NCBI Taxonomy" id="265072"/>
    <lineage>
        <taxon>Bacteria</taxon>
        <taxon>Pseudomonadati</taxon>
        <taxon>Pseudomonadota</taxon>
        <taxon>Betaproteobacteria</taxon>
        <taxon>Nitrosomonadales</taxon>
        <taxon>Methylophilaceae</taxon>
        <taxon>Methylobacillus</taxon>
    </lineage>
</organism>
<protein>
    <recommendedName>
        <fullName evidence="1">Tetraacyldisaccharide 4'-kinase</fullName>
        <ecNumber evidence="1">2.7.1.130</ecNumber>
    </recommendedName>
    <alternativeName>
        <fullName evidence="1">Lipid A 4'-kinase</fullName>
    </alternativeName>
</protein>
<dbReference type="EC" id="2.7.1.130" evidence="1"/>
<dbReference type="EMBL" id="CP000284">
    <property type="protein sequence ID" value="ABE50356.1"/>
    <property type="molecule type" value="Genomic_DNA"/>
</dbReference>
<dbReference type="RefSeq" id="WP_011480310.1">
    <property type="nucleotide sequence ID" value="NC_007947.1"/>
</dbReference>
<dbReference type="SMR" id="Q1GZI1"/>
<dbReference type="STRING" id="265072.Mfla_2089"/>
<dbReference type="KEGG" id="mfa:Mfla_2089"/>
<dbReference type="eggNOG" id="COG1663">
    <property type="taxonomic scope" value="Bacteria"/>
</dbReference>
<dbReference type="HOGENOM" id="CLU_038816_2_0_4"/>
<dbReference type="OrthoDB" id="9766423at2"/>
<dbReference type="UniPathway" id="UPA00359">
    <property type="reaction ID" value="UER00482"/>
</dbReference>
<dbReference type="Proteomes" id="UP000002440">
    <property type="component" value="Chromosome"/>
</dbReference>
<dbReference type="GO" id="GO:0005886">
    <property type="term" value="C:plasma membrane"/>
    <property type="evidence" value="ECO:0007669"/>
    <property type="project" value="TreeGrafter"/>
</dbReference>
<dbReference type="GO" id="GO:0005524">
    <property type="term" value="F:ATP binding"/>
    <property type="evidence" value="ECO:0007669"/>
    <property type="project" value="UniProtKB-UniRule"/>
</dbReference>
<dbReference type="GO" id="GO:0009029">
    <property type="term" value="F:tetraacyldisaccharide 4'-kinase activity"/>
    <property type="evidence" value="ECO:0007669"/>
    <property type="project" value="UniProtKB-UniRule"/>
</dbReference>
<dbReference type="GO" id="GO:0009245">
    <property type="term" value="P:lipid A biosynthetic process"/>
    <property type="evidence" value="ECO:0007669"/>
    <property type="project" value="UniProtKB-UniRule"/>
</dbReference>
<dbReference type="GO" id="GO:0009244">
    <property type="term" value="P:lipopolysaccharide core region biosynthetic process"/>
    <property type="evidence" value="ECO:0007669"/>
    <property type="project" value="TreeGrafter"/>
</dbReference>
<dbReference type="HAMAP" id="MF_00409">
    <property type="entry name" value="LpxK"/>
    <property type="match status" value="1"/>
</dbReference>
<dbReference type="InterPro" id="IPR003758">
    <property type="entry name" value="LpxK"/>
</dbReference>
<dbReference type="InterPro" id="IPR027417">
    <property type="entry name" value="P-loop_NTPase"/>
</dbReference>
<dbReference type="NCBIfam" id="TIGR00682">
    <property type="entry name" value="lpxK"/>
    <property type="match status" value="1"/>
</dbReference>
<dbReference type="PANTHER" id="PTHR42724">
    <property type="entry name" value="TETRAACYLDISACCHARIDE 4'-KINASE"/>
    <property type="match status" value="1"/>
</dbReference>
<dbReference type="PANTHER" id="PTHR42724:SF1">
    <property type="entry name" value="TETRAACYLDISACCHARIDE 4'-KINASE, MITOCHONDRIAL-RELATED"/>
    <property type="match status" value="1"/>
</dbReference>
<dbReference type="Pfam" id="PF02606">
    <property type="entry name" value="LpxK"/>
    <property type="match status" value="1"/>
</dbReference>
<dbReference type="SUPFAM" id="SSF52540">
    <property type="entry name" value="P-loop containing nucleoside triphosphate hydrolases"/>
    <property type="match status" value="1"/>
</dbReference>
<gene>
    <name evidence="1" type="primary">lpxK</name>
    <name type="ordered locus">Mfla_2089</name>
</gene>
<sequence length="335" mass="38111">MGQSFSRWLERQWYGHTGWQLILRPFSWLFYILIALRRLAYRLRLFKSLKLSVPVIIVGNINVGGTGKTPFVIWLVQQLRQNGWYPGIISRGYGGKSIHTHQVTKDSLPQEVGDEPVLLVQRTGLPLYVGRKRTRAARHLLRDYPECNLIISDDGLQHYALERDMEIVIIDGERIFGNGQLLPAGPLREPSSRLEDVDAVVFNGGPPAAGGYLMQLIPEDLRKVSAPQERMALNELIGQHVHAVAGIGNPQRFFGQLEQLGLVVEAHPFPDHHAYTEDDFEFAKDDIVLMTEKDAVKCIAFARENWWFMPISAEIDRALAEKILARLTRLMEKEI</sequence>
<name>LPXK_METFK</name>
<accession>Q1GZI1</accession>
<reference key="1">
    <citation type="submission" date="2006-03" db="EMBL/GenBank/DDBJ databases">
        <title>Complete sequence of Methylobacillus flagellatus KT.</title>
        <authorList>
            <consortium name="US DOE Joint Genome Institute"/>
            <person name="Copeland A."/>
            <person name="Lucas S."/>
            <person name="Lapidus A."/>
            <person name="Barry K."/>
            <person name="Detter J.C."/>
            <person name="Glavina del Rio T."/>
            <person name="Hammon N."/>
            <person name="Israni S."/>
            <person name="Dalin E."/>
            <person name="Tice H."/>
            <person name="Pitluck S."/>
            <person name="Brettin T."/>
            <person name="Bruce D."/>
            <person name="Han C."/>
            <person name="Tapia R."/>
            <person name="Saunders E."/>
            <person name="Gilna P."/>
            <person name="Schmutz J."/>
            <person name="Larimer F."/>
            <person name="Land M."/>
            <person name="Kyrpides N."/>
            <person name="Anderson I."/>
            <person name="Richardson P."/>
        </authorList>
    </citation>
    <scope>NUCLEOTIDE SEQUENCE [LARGE SCALE GENOMIC DNA]</scope>
    <source>
        <strain>ATCC 51484 / DSM 6875 / VKM B-1610 / KT</strain>
    </source>
</reference>